<name>GUX1_HYPJR</name>
<reference key="1">
    <citation type="journal article" date="2013" name="Ind. Biotechnol.">
        <title>Comparative genomics analysis of Trichoderma reesei strains.</title>
        <authorList>
            <person name="Koike H."/>
            <person name="Aerts A."/>
            <person name="LaButti K."/>
            <person name="Grigoriev I.V."/>
            <person name="Baker S.E."/>
        </authorList>
    </citation>
    <scope>NUCLEOTIDE SEQUENCE [LARGE SCALE GENOMIC DNA]</scope>
    <source>
        <strain>ATCC 56765 / BCRC 32924 / NRRL 11460 / Rut C-30</strain>
    </source>
</reference>
<reference key="2">
    <citation type="journal article" date="2001" name="J. Chromatogr. B">
        <title>Characterization of cellobiohydrolase I (Cel7A) glycoforms from extracts of Trichoderma reesei using capillary isoelectric focusing and electrospray mass spectrometry.</title>
        <authorList>
            <person name="Hui J.P.M."/>
            <person name="Lanthier P."/>
            <person name="White T.C."/>
            <person name="McHugh S.G."/>
            <person name="Yaguchi M."/>
            <person name="Roy R."/>
            <person name="Thibault P."/>
        </authorList>
    </citation>
    <scope>GLYCOSYLATION AT ASN-62; ASN-287 AND ASN-401</scope>
    <source>
        <strain>ATCC 56765 / BCRC 32924 / NRRL 11460 / Rut C-30</strain>
    </source>
</reference>
<keyword id="KW-0119">Carbohydrate metabolism</keyword>
<keyword id="KW-0136">Cellulose degradation</keyword>
<keyword id="KW-1015">Disulfide bond</keyword>
<keyword id="KW-0325">Glycoprotein</keyword>
<keyword id="KW-0326">Glycosidase</keyword>
<keyword id="KW-0378">Hydrolase</keyword>
<keyword id="KW-0624">Polysaccharide degradation</keyword>
<keyword id="KW-0873">Pyrrolidone carboxylic acid</keyword>
<keyword id="KW-0964">Secreted</keyword>
<keyword id="KW-0732">Signal</keyword>
<feature type="signal peptide" evidence="2">
    <location>
        <begin position="1"/>
        <end position="17"/>
    </location>
</feature>
<feature type="chain" id="PRO_5001533368" description="Exoglucanase 1">
    <location>
        <begin position="18"/>
        <end position="514"/>
    </location>
</feature>
<feature type="domain" description="CBM1" evidence="3">
    <location>
        <begin position="478"/>
        <end position="514"/>
    </location>
</feature>
<feature type="region of interest" description="Catalytic" evidence="1">
    <location>
        <begin position="18"/>
        <end position="453"/>
    </location>
</feature>
<feature type="region of interest" description="Disordered" evidence="4">
    <location>
        <begin position="401"/>
        <end position="481"/>
    </location>
</feature>
<feature type="region of interest" description="Linker" evidence="1">
    <location>
        <begin position="454"/>
        <end position="478"/>
    </location>
</feature>
<feature type="compositionally biased region" description="Polar residues" evidence="4">
    <location>
        <begin position="401"/>
        <end position="437"/>
    </location>
</feature>
<feature type="compositionally biased region" description="Low complexity" evidence="4">
    <location>
        <begin position="460"/>
        <end position="479"/>
    </location>
</feature>
<feature type="active site" description="Nucleophile" evidence="1">
    <location>
        <position position="229"/>
    </location>
</feature>
<feature type="active site" description="Proton donor/acceptor" evidence="1">
    <location>
        <position position="234"/>
    </location>
</feature>
<feature type="site" description="Not glycosylated" evidence="1">
    <location>
        <position position="81"/>
    </location>
</feature>
<feature type="modified residue" description="Pyrrolidone carboxylic acid" evidence="1">
    <location>
        <position position="18"/>
    </location>
</feature>
<feature type="glycosylation site" description="N-linked (GlcNAc) asparagine" evidence="5">
    <location>
        <position position="62"/>
    </location>
</feature>
<feature type="glycosylation site" description="N-linked (GlcNAc...) (high mannose) asparagine" evidence="5">
    <location>
        <position position="287"/>
    </location>
</feature>
<feature type="glycosylation site" description="N-linked (GlcNAc) asparagine" evidence="5">
    <location>
        <position position="401"/>
    </location>
</feature>
<feature type="glycosylation site" description="O-linked (Man) threonine" evidence="1">
    <location>
        <position position="462"/>
    </location>
</feature>
<feature type="glycosylation site" description="O-linked (Man...) threonine" evidence="1">
    <location>
        <position position="463"/>
    </location>
</feature>
<feature type="glycosylation site" description="O-linked (Man...) threonine" evidence="1">
    <location>
        <position position="464"/>
    </location>
</feature>
<feature type="glycosylation site" description="O-linked (Man...) threonine" evidence="1">
    <location>
        <position position="465"/>
    </location>
</feature>
<feature type="glycosylation site" description="O-linked (Man) threonine" evidence="1">
    <location>
        <position position="470"/>
    </location>
</feature>
<feature type="glycosylation site" description="O-linked (Man...) threonine" evidence="1">
    <location>
        <position position="471"/>
    </location>
</feature>
<feature type="glycosylation site" description="O-linked (Man...) threonine" evidence="1">
    <location>
        <position position="472"/>
    </location>
</feature>
<feature type="glycosylation site" description="O-linked (Man) serine" evidence="1">
    <location>
        <position position="474"/>
    </location>
</feature>
<feature type="glycosylation site" description="O-linked (Man) serine" evidence="1">
    <location>
        <position position="475"/>
    </location>
</feature>
<feature type="glycosylation site" description="O-linked (Man) threonine" evidence="1">
    <location>
        <position position="479"/>
    </location>
</feature>
<feature type="glycosylation site" description="O-linked (Man) serine" evidence="1">
    <location>
        <position position="481"/>
    </location>
</feature>
<feature type="glycosylation site" description="O-linked (Man) serine" evidence="1">
    <location>
        <position position="492"/>
    </location>
</feature>
<feature type="disulfide bond" evidence="1">
    <location>
        <begin position="21"/>
        <end position="89"/>
    </location>
</feature>
<feature type="disulfide bond" evidence="1">
    <location>
        <begin position="36"/>
        <end position="42"/>
    </location>
</feature>
<feature type="disulfide bond" evidence="1">
    <location>
        <begin position="67"/>
        <end position="88"/>
    </location>
</feature>
<feature type="disulfide bond" evidence="1">
    <location>
        <begin position="78"/>
        <end position="84"/>
    </location>
</feature>
<feature type="disulfide bond" evidence="1">
    <location>
        <begin position="155"/>
        <end position="414"/>
    </location>
</feature>
<feature type="disulfide bond" evidence="1">
    <location>
        <begin position="189"/>
        <end position="227"/>
    </location>
</feature>
<feature type="disulfide bond" evidence="1">
    <location>
        <begin position="193"/>
        <end position="226"/>
    </location>
</feature>
<feature type="disulfide bond" evidence="1">
    <location>
        <begin position="247"/>
        <end position="273"/>
    </location>
</feature>
<feature type="disulfide bond" evidence="1">
    <location>
        <begin position="255"/>
        <end position="260"/>
    </location>
</feature>
<feature type="disulfide bond" evidence="1">
    <location>
        <begin position="278"/>
        <end position="348"/>
    </location>
</feature>
<feature type="disulfide bond" evidence="1">
    <location>
        <begin position="486"/>
        <end position="503"/>
    </location>
</feature>
<feature type="disulfide bond" evidence="1">
    <location>
        <begin position="497"/>
        <end position="513"/>
    </location>
</feature>
<organism>
    <name type="scientific">Hypocrea jecorina (strain ATCC 56765 / BCRC 32924 / NRRL 11460 / Rut C-30)</name>
    <name type="common">Trichoderma reesei</name>
    <dbReference type="NCBI Taxonomy" id="1344414"/>
    <lineage>
        <taxon>Eukaryota</taxon>
        <taxon>Fungi</taxon>
        <taxon>Dikarya</taxon>
        <taxon>Ascomycota</taxon>
        <taxon>Pezizomycotina</taxon>
        <taxon>Sordariomycetes</taxon>
        <taxon>Hypocreomycetidae</taxon>
        <taxon>Hypocreales</taxon>
        <taxon>Hypocreaceae</taxon>
        <taxon>Trichoderma</taxon>
    </lineage>
</organism>
<accession>A0A024RXP8</accession>
<gene>
    <name type="primary">cbh1</name>
    <name type="ORF">M419DRAFT_125125</name>
</gene>
<protein>
    <recommendedName>
        <fullName>Exoglucanase 1</fullName>
        <ecNumber evidence="1">3.2.1.91</ecNumber>
    </recommendedName>
    <alternativeName>
        <fullName>1,4-beta-cellobiohydrolase</fullName>
    </alternativeName>
    <alternativeName>
        <fullName>Cellobiohydrolase 7A</fullName>
        <shortName>Cel7A</shortName>
    </alternativeName>
    <alternativeName>
        <fullName>Exocellobiohydrolase I</fullName>
        <shortName>CBHI</shortName>
    </alternativeName>
    <alternativeName>
        <fullName>Exoglucanase I</fullName>
    </alternativeName>
</protein>
<comment type="function">
    <text evidence="1">Exocellobiohydrolases (CBH) that catalyzes the hydrolysis of 1,4-beta-D-glucosidic bonds in cellulose to release the disaccharide cellobiose. The degradation of cellulose involves an interplay between different cellulolytic enzymes. Hydrolysis starts with endoglucanases (EGs), which cut internal beta-1,4-glucosidic bonds in cellulose to reduce the polymerization degree of the substrate and create new chain ends for exocellobiohydrolases (CBHs). The CBHs release the disaccharide cellobiose from the non-reducing end of the cellulose polymer chain. Finally, beta-1,4-glucosidases hydrolyze the cellobiose and other short cello-oligosaccharides into glucose units.</text>
</comment>
<comment type="catalytic activity">
    <reaction evidence="1">
        <text>Hydrolysis of (1-&gt;4)-beta-D-glucosidic linkages in cellulose and cellotetraose, releasing cellobiose from the non-reducing ends of the chains.</text>
        <dbReference type="EC" id="3.2.1.91"/>
    </reaction>
</comment>
<comment type="subcellular location">
    <subcellularLocation>
        <location evidence="1">Secreted</location>
    </subcellularLocation>
</comment>
<comment type="domain">
    <text evidence="1">The enzyme consists of two functional domains, a catalytic core joined to a carbohydrate-binding domain (CBM) by a serine-, threonine-, and proline-rich, highly glycosylated linker sequence.</text>
</comment>
<comment type="PTM">
    <text evidence="5">N-glycosylated. A high mannose glycan is attached to Asn-287 (predominantly Man(8)GlcNAc(2)) and single GlcNAc occupancy is observed at Asn-62 and Asn-401 with some site heterogeneity depending on strains and fermentation conditions.</text>
</comment>
<comment type="PTM">
    <text evidence="1">O-glycosylated. Within the linker domain, all 8 threonines are variably glycosylated with between at least one, and up to three, mannose residues per site. All serines in this domain are at least partially glycosylated with a single mannose residue. O-glycosylation of the cellulase linker provides protection from proteolysis. Linker glycans also contribute to binding affinity of cellobiohydrolases to cellulose.</text>
</comment>
<comment type="similarity">
    <text evidence="6">Belongs to the glycosyl hydrolase 7 (cellulase C) family.</text>
</comment>
<dbReference type="EC" id="3.2.1.91" evidence="1"/>
<dbReference type="EMBL" id="KI911168">
    <property type="protein sequence ID" value="ETR97652.1"/>
    <property type="molecule type" value="Genomic_DNA"/>
</dbReference>
<dbReference type="SMR" id="A0A024RXP8"/>
<dbReference type="GlyCosmos" id="A0A024RXP8">
    <property type="glycosylation" value="15 sites, No reported glycans"/>
</dbReference>
<dbReference type="iPTMnet" id="A0A024RXP8"/>
<dbReference type="KEGG" id="trr:M419DRAFT_125125"/>
<dbReference type="HOGENOM" id="CLU_020817_3_2_1"/>
<dbReference type="OrthoDB" id="10628at5129"/>
<dbReference type="BRENDA" id="3.2.1.91">
    <property type="organism ID" value="6451"/>
</dbReference>
<dbReference type="Proteomes" id="UP000024376">
    <property type="component" value="Unassembled WGS sequence"/>
</dbReference>
<dbReference type="GO" id="GO:0005576">
    <property type="term" value="C:extracellular region"/>
    <property type="evidence" value="ECO:0007669"/>
    <property type="project" value="UniProtKB-SubCell"/>
</dbReference>
<dbReference type="GO" id="GO:0016162">
    <property type="term" value="F:cellulose 1,4-beta-cellobiosidase activity"/>
    <property type="evidence" value="ECO:0007669"/>
    <property type="project" value="UniProtKB-EC"/>
</dbReference>
<dbReference type="GO" id="GO:0030248">
    <property type="term" value="F:cellulose binding"/>
    <property type="evidence" value="ECO:0007669"/>
    <property type="project" value="InterPro"/>
</dbReference>
<dbReference type="GO" id="GO:0030245">
    <property type="term" value="P:cellulose catabolic process"/>
    <property type="evidence" value="ECO:0007669"/>
    <property type="project" value="UniProtKB-KW"/>
</dbReference>
<dbReference type="CDD" id="cd07999">
    <property type="entry name" value="GH7_CBH_EG"/>
    <property type="match status" value="1"/>
</dbReference>
<dbReference type="FunFam" id="2.70.100.10:FF:000001">
    <property type="entry name" value="Glucanase"/>
    <property type="match status" value="1"/>
</dbReference>
<dbReference type="Gene3D" id="2.70.100.10">
    <property type="entry name" value="Glycoside hydrolase, family 7, domain"/>
    <property type="match status" value="1"/>
</dbReference>
<dbReference type="InterPro" id="IPR035971">
    <property type="entry name" value="CBD_sf"/>
</dbReference>
<dbReference type="InterPro" id="IPR000254">
    <property type="entry name" value="Cellulose-bd_dom_fun"/>
</dbReference>
<dbReference type="InterPro" id="IPR013320">
    <property type="entry name" value="ConA-like_dom_sf"/>
</dbReference>
<dbReference type="InterPro" id="IPR001722">
    <property type="entry name" value="Glyco_hydro_7"/>
</dbReference>
<dbReference type="InterPro" id="IPR037019">
    <property type="entry name" value="Glyco_hydro_7_sf"/>
</dbReference>
<dbReference type="PANTHER" id="PTHR33753">
    <property type="entry name" value="1,4-BETA-D-GLUCAN CELLOBIOHYDROLASE B"/>
    <property type="match status" value="1"/>
</dbReference>
<dbReference type="PANTHER" id="PTHR33753:SF2">
    <property type="entry name" value="GLYCOSIDE HYDROLASE FAMILY 7 PROTEIN"/>
    <property type="match status" value="1"/>
</dbReference>
<dbReference type="Pfam" id="PF00734">
    <property type="entry name" value="CBM_1"/>
    <property type="match status" value="1"/>
</dbReference>
<dbReference type="Pfam" id="PF00840">
    <property type="entry name" value="Glyco_hydro_7"/>
    <property type="match status" value="1"/>
</dbReference>
<dbReference type="PRINTS" id="PR00734">
    <property type="entry name" value="GLHYDRLASE7"/>
</dbReference>
<dbReference type="SMART" id="SM00236">
    <property type="entry name" value="fCBD"/>
    <property type="match status" value="1"/>
</dbReference>
<dbReference type="SUPFAM" id="SSF57180">
    <property type="entry name" value="Cellulose-binding domain"/>
    <property type="match status" value="1"/>
</dbReference>
<dbReference type="SUPFAM" id="SSF49899">
    <property type="entry name" value="Concanavalin A-like lectins/glucanases"/>
    <property type="match status" value="1"/>
</dbReference>
<dbReference type="PROSITE" id="PS00562">
    <property type="entry name" value="CBM1_1"/>
    <property type="match status" value="1"/>
</dbReference>
<dbReference type="PROSITE" id="PS51164">
    <property type="entry name" value="CBM1_2"/>
    <property type="match status" value="1"/>
</dbReference>
<evidence type="ECO:0000250" key="1">
    <source>
        <dbReference type="UniProtKB" id="P62694"/>
    </source>
</evidence>
<evidence type="ECO:0000255" key="2"/>
<evidence type="ECO:0000255" key="3">
    <source>
        <dbReference type="PROSITE-ProRule" id="PRU00597"/>
    </source>
</evidence>
<evidence type="ECO:0000256" key="4">
    <source>
        <dbReference type="SAM" id="MobiDB-lite"/>
    </source>
</evidence>
<evidence type="ECO:0000269" key="5">
    <source>
    </source>
</evidence>
<evidence type="ECO:0000305" key="6"/>
<sequence length="514" mass="54111">MYRKLAVISAFLATARAQSACTLQSETHPPLTWQKCSSGGTCTQQTGSVVIDANWRWTHATNSSTNCYDGNTWSSTLCPDNETCAKNCCLDGAAYASTYGVTTSGNSLSIGFVTQSAQKNVGARLYLMASDTTYQEFTLLGNEFSFDVDVSQLPCGLNGALYFVSMDADGGVSKYPTNTAGAKYGTGYCDSQCPRDLKFINGQANVEGWEPSSNNANTGIGGHGSCCSEMDIWEANSISEALTPHPCTTVGQEICEGDGCGGTYSDNRYGGTCDPDGCDWNPYRLGNTSFYGPGSSFTLDTTKKLTVVTQFETSGAINRYYVQNGVTFQQPNAELGSYSGNELNDDYCTAEEAEFGGSSFSDKGGLTQFKKATSGGMVLVMSLWDDYYANMLWLDSTYPTNETSSTPGAVRGSCSTSSGVPAQVESQSPNAKVTFSNIKFGPIGSTGNPSGGNPPGGNPPGTTTTRRPATTTGSSPGPTQSHYGQCGGIGYSGPTVCASGTTCQVLNPYYSQCL</sequence>
<proteinExistence type="evidence at protein level"/>